<gene>
    <name type="primary">pex13</name>
    <name type="ORF">SPAC3C7.10</name>
</gene>
<protein>
    <recommendedName>
        <fullName>Peroxisomal membrane protein pex13</fullName>
    </recommendedName>
    <alternativeName>
        <fullName>Peroxin-13</fullName>
    </alternativeName>
</protein>
<comment type="function">
    <text evidence="1">Component of the PEX13-PEX14 docking complex, a translocon channel that specifically mediates the import of peroxisomal cargo proteins bound to PEX5 receptor. The PEX13-PEX14 docking complex forms a large import pore which can be opened to a diameter of about 9 nm. Mechanistically, PEX5 receptor along with cargo proteins associates with the PEX14 subunit of the PEX13-PEX14 docking complex in the cytosol, leading to the insertion of the receptor into the organelle membrane with the concomitant translocation of the cargo into the peroxisome matrix.</text>
</comment>
<comment type="subunit">
    <text evidence="1">Interacts (via SH3 domain) with PEX14 (via SH3-binding motif); forming the PEX13-PEX14 docking complex.</text>
</comment>
<comment type="subcellular location">
    <subcellularLocation>
        <location evidence="1">Peroxisome membrane</location>
        <topology evidence="1">Single-pass membrane protein</topology>
    </subcellularLocation>
</comment>
<comment type="similarity">
    <text evidence="5">Belongs to the peroxin-13 family.</text>
</comment>
<proteinExistence type="inferred from homology"/>
<dbReference type="EMBL" id="CU329670">
    <property type="protein sequence ID" value="CAB16740.1"/>
    <property type="molecule type" value="Genomic_DNA"/>
</dbReference>
<dbReference type="PIR" id="T38696">
    <property type="entry name" value="T38696"/>
</dbReference>
<dbReference type="RefSeq" id="NP_593611.1">
    <property type="nucleotide sequence ID" value="NM_001019042.2"/>
</dbReference>
<dbReference type="SMR" id="O14136"/>
<dbReference type="BioGRID" id="279481">
    <property type="interactions" value="23"/>
</dbReference>
<dbReference type="FunCoup" id="O14136">
    <property type="interactions" value="119"/>
</dbReference>
<dbReference type="STRING" id="284812.O14136"/>
<dbReference type="PaxDb" id="4896-SPAC3C7.10.1"/>
<dbReference type="EnsemblFungi" id="SPAC3C7.10.1">
    <property type="protein sequence ID" value="SPAC3C7.10.1:pep"/>
    <property type="gene ID" value="SPAC3C7.10"/>
</dbReference>
<dbReference type="GeneID" id="2543046"/>
<dbReference type="KEGG" id="spo:2543046"/>
<dbReference type="PomBase" id="SPAC3C7.10">
    <property type="gene designation" value="pex13"/>
</dbReference>
<dbReference type="VEuPathDB" id="FungiDB:SPAC3C7.10"/>
<dbReference type="eggNOG" id="KOG3875">
    <property type="taxonomic scope" value="Eukaryota"/>
</dbReference>
<dbReference type="HOGENOM" id="CLU_966951_0_0_1"/>
<dbReference type="InParanoid" id="O14136"/>
<dbReference type="OMA" id="LMAAHMS"/>
<dbReference type="PhylomeDB" id="O14136"/>
<dbReference type="Reactome" id="R-SPO-8866654">
    <property type="pathway name" value="E3 ubiquitin ligases ubiquitinate target proteins"/>
</dbReference>
<dbReference type="Reactome" id="R-SPO-9033241">
    <property type="pathway name" value="Peroxisomal protein import"/>
</dbReference>
<dbReference type="Reactome" id="R-SPO-9603798">
    <property type="pathway name" value="Class I peroxisomal membrane protein import"/>
</dbReference>
<dbReference type="PRO" id="PR:O14136"/>
<dbReference type="Proteomes" id="UP000002485">
    <property type="component" value="Chromosome I"/>
</dbReference>
<dbReference type="GO" id="GO:0005737">
    <property type="term" value="C:cytoplasm"/>
    <property type="evidence" value="ECO:0007005"/>
    <property type="project" value="PomBase"/>
</dbReference>
<dbReference type="GO" id="GO:1990429">
    <property type="term" value="C:peroxisomal importomer complex"/>
    <property type="evidence" value="ECO:0000318"/>
    <property type="project" value="GO_Central"/>
</dbReference>
<dbReference type="GO" id="GO:0005778">
    <property type="term" value="C:peroxisomal membrane"/>
    <property type="evidence" value="ECO:0000318"/>
    <property type="project" value="GO_Central"/>
</dbReference>
<dbReference type="GO" id="GO:0016560">
    <property type="term" value="P:protein import into peroxisome matrix, docking"/>
    <property type="evidence" value="ECO:0000318"/>
    <property type="project" value="GO_Central"/>
</dbReference>
<dbReference type="GO" id="GO:0006625">
    <property type="term" value="P:protein targeting to peroxisome"/>
    <property type="evidence" value="ECO:0000266"/>
    <property type="project" value="PomBase"/>
</dbReference>
<dbReference type="CDD" id="cd11771">
    <property type="entry name" value="SH3_Pex13p_fungal"/>
    <property type="match status" value="1"/>
</dbReference>
<dbReference type="FunFam" id="2.30.30.40:FF:000128">
    <property type="entry name" value="Peroxisomal membrane protein (Pex13)"/>
    <property type="match status" value="1"/>
</dbReference>
<dbReference type="Gene3D" id="2.30.30.40">
    <property type="entry name" value="SH3 Domains"/>
    <property type="match status" value="1"/>
</dbReference>
<dbReference type="InterPro" id="IPR007223">
    <property type="entry name" value="Peroxin-13_N"/>
</dbReference>
<dbReference type="InterPro" id="IPR035463">
    <property type="entry name" value="Pex13"/>
</dbReference>
<dbReference type="InterPro" id="IPR036028">
    <property type="entry name" value="SH3-like_dom_sf"/>
</dbReference>
<dbReference type="InterPro" id="IPR001452">
    <property type="entry name" value="SH3_domain"/>
</dbReference>
<dbReference type="PANTHER" id="PTHR19332">
    <property type="entry name" value="PEROXISOMAL MEMBRANE PROTEIN PEX13"/>
    <property type="match status" value="1"/>
</dbReference>
<dbReference type="PANTHER" id="PTHR19332:SF1">
    <property type="entry name" value="PEROXISOMAL MEMBRANE PROTEIN PEX13"/>
    <property type="match status" value="1"/>
</dbReference>
<dbReference type="Pfam" id="PF04088">
    <property type="entry name" value="Peroxin-13_N"/>
    <property type="match status" value="1"/>
</dbReference>
<dbReference type="Pfam" id="PF00018">
    <property type="entry name" value="SH3_1"/>
    <property type="match status" value="1"/>
</dbReference>
<dbReference type="PRINTS" id="PR00452">
    <property type="entry name" value="SH3DOMAIN"/>
</dbReference>
<dbReference type="SMART" id="SM00326">
    <property type="entry name" value="SH3"/>
    <property type="match status" value="1"/>
</dbReference>
<dbReference type="SUPFAM" id="SSF50044">
    <property type="entry name" value="SH3-domain"/>
    <property type="match status" value="1"/>
</dbReference>
<dbReference type="PROSITE" id="PS50002">
    <property type="entry name" value="SH3"/>
    <property type="match status" value="1"/>
</dbReference>
<organism>
    <name type="scientific">Schizosaccharomyces pombe (strain 972 / ATCC 24843)</name>
    <name type="common">Fission yeast</name>
    <dbReference type="NCBI Taxonomy" id="284812"/>
    <lineage>
        <taxon>Eukaryota</taxon>
        <taxon>Fungi</taxon>
        <taxon>Dikarya</taxon>
        <taxon>Ascomycota</taxon>
        <taxon>Taphrinomycotina</taxon>
        <taxon>Schizosaccharomycetes</taxon>
        <taxon>Schizosaccharomycetales</taxon>
        <taxon>Schizosaccharomycetaceae</taxon>
        <taxon>Schizosaccharomyces</taxon>
    </lineage>
</organism>
<sequence length="288" mass="32055">METNQNEKGPSLPSYPAGGIMSVSNSNADTNQGVTQHPLANRIVNPNYYNMGFNPYSGFNSFIPSFNPFVPLETNLPGNGPISSLQVIESIVGAVGSIAQVLESTLMAAHMSYNTFVSVSENLNKLKSSIGAIFGIVSLLSRLKRLVLKFFKHSKIDEMNSQEYDVFEKEEGNHKNSIYSIVSSLAIILGLVGLPYAIIRLFKNIYEKEKQIQQAKIRKKIDSLEFCKADYEFMSRDPGVEMSLKKGDIIAILSKTDTQGNPCEWWQGRKRSGETGWFPSNYCSIISR</sequence>
<reference key="1">
    <citation type="journal article" date="2002" name="Nature">
        <title>The genome sequence of Schizosaccharomyces pombe.</title>
        <authorList>
            <person name="Wood V."/>
            <person name="Gwilliam R."/>
            <person name="Rajandream M.A."/>
            <person name="Lyne M.H."/>
            <person name="Lyne R."/>
            <person name="Stewart A."/>
            <person name="Sgouros J.G."/>
            <person name="Peat N."/>
            <person name="Hayles J."/>
            <person name="Baker S.G."/>
            <person name="Basham D."/>
            <person name="Bowman S."/>
            <person name="Brooks K."/>
            <person name="Brown D."/>
            <person name="Brown S."/>
            <person name="Chillingworth T."/>
            <person name="Churcher C.M."/>
            <person name="Collins M."/>
            <person name="Connor R."/>
            <person name="Cronin A."/>
            <person name="Davis P."/>
            <person name="Feltwell T."/>
            <person name="Fraser A."/>
            <person name="Gentles S."/>
            <person name="Goble A."/>
            <person name="Hamlin N."/>
            <person name="Harris D.E."/>
            <person name="Hidalgo J."/>
            <person name="Hodgson G."/>
            <person name="Holroyd S."/>
            <person name="Hornsby T."/>
            <person name="Howarth S."/>
            <person name="Huckle E.J."/>
            <person name="Hunt S."/>
            <person name="Jagels K."/>
            <person name="James K.D."/>
            <person name="Jones L."/>
            <person name="Jones M."/>
            <person name="Leather S."/>
            <person name="McDonald S."/>
            <person name="McLean J."/>
            <person name="Mooney P."/>
            <person name="Moule S."/>
            <person name="Mungall K.L."/>
            <person name="Murphy L.D."/>
            <person name="Niblett D."/>
            <person name="Odell C."/>
            <person name="Oliver K."/>
            <person name="O'Neil S."/>
            <person name="Pearson D."/>
            <person name="Quail M.A."/>
            <person name="Rabbinowitsch E."/>
            <person name="Rutherford K.M."/>
            <person name="Rutter S."/>
            <person name="Saunders D."/>
            <person name="Seeger K."/>
            <person name="Sharp S."/>
            <person name="Skelton J."/>
            <person name="Simmonds M.N."/>
            <person name="Squares R."/>
            <person name="Squares S."/>
            <person name="Stevens K."/>
            <person name="Taylor K."/>
            <person name="Taylor R.G."/>
            <person name="Tivey A."/>
            <person name="Walsh S.V."/>
            <person name="Warren T."/>
            <person name="Whitehead S."/>
            <person name="Woodward J.R."/>
            <person name="Volckaert G."/>
            <person name="Aert R."/>
            <person name="Robben J."/>
            <person name="Grymonprez B."/>
            <person name="Weltjens I."/>
            <person name="Vanstreels E."/>
            <person name="Rieger M."/>
            <person name="Schaefer M."/>
            <person name="Mueller-Auer S."/>
            <person name="Gabel C."/>
            <person name="Fuchs M."/>
            <person name="Duesterhoeft A."/>
            <person name="Fritzc C."/>
            <person name="Holzer E."/>
            <person name="Moestl D."/>
            <person name="Hilbert H."/>
            <person name="Borzym K."/>
            <person name="Langer I."/>
            <person name="Beck A."/>
            <person name="Lehrach H."/>
            <person name="Reinhardt R."/>
            <person name="Pohl T.M."/>
            <person name="Eger P."/>
            <person name="Zimmermann W."/>
            <person name="Wedler H."/>
            <person name="Wambutt R."/>
            <person name="Purnelle B."/>
            <person name="Goffeau A."/>
            <person name="Cadieu E."/>
            <person name="Dreano S."/>
            <person name="Gloux S."/>
            <person name="Lelaure V."/>
            <person name="Mottier S."/>
            <person name="Galibert F."/>
            <person name="Aves S.J."/>
            <person name="Xiang Z."/>
            <person name="Hunt C."/>
            <person name="Moore K."/>
            <person name="Hurst S.M."/>
            <person name="Lucas M."/>
            <person name="Rochet M."/>
            <person name="Gaillardin C."/>
            <person name="Tallada V.A."/>
            <person name="Garzon A."/>
            <person name="Thode G."/>
            <person name="Daga R.R."/>
            <person name="Cruzado L."/>
            <person name="Jimenez J."/>
            <person name="Sanchez M."/>
            <person name="del Rey F."/>
            <person name="Benito J."/>
            <person name="Dominguez A."/>
            <person name="Revuelta J.L."/>
            <person name="Moreno S."/>
            <person name="Armstrong J."/>
            <person name="Forsburg S.L."/>
            <person name="Cerutti L."/>
            <person name="Lowe T."/>
            <person name="McCombie W.R."/>
            <person name="Paulsen I."/>
            <person name="Potashkin J."/>
            <person name="Shpakovski G.V."/>
            <person name="Ussery D."/>
            <person name="Barrell B.G."/>
            <person name="Nurse P."/>
        </authorList>
    </citation>
    <scope>NUCLEOTIDE SEQUENCE [LARGE SCALE GENOMIC DNA]</scope>
    <source>
        <strain>972 / ATCC 24843</strain>
    </source>
</reference>
<name>PEX13_SCHPO</name>
<keyword id="KW-0472">Membrane</keyword>
<keyword id="KW-0576">Peroxisome</keyword>
<keyword id="KW-0653">Protein transport</keyword>
<keyword id="KW-1185">Reference proteome</keyword>
<keyword id="KW-0728">SH3 domain</keyword>
<keyword id="KW-0811">Translocation</keyword>
<keyword id="KW-0812">Transmembrane</keyword>
<keyword id="KW-1133">Transmembrane helix</keyword>
<keyword id="KW-0813">Transport</keyword>
<evidence type="ECO:0000250" key="1">
    <source>
        <dbReference type="UniProtKB" id="P80667"/>
    </source>
</evidence>
<evidence type="ECO:0000255" key="2"/>
<evidence type="ECO:0000255" key="3">
    <source>
        <dbReference type="PROSITE-ProRule" id="PRU00192"/>
    </source>
</evidence>
<evidence type="ECO:0000256" key="4">
    <source>
        <dbReference type="SAM" id="MobiDB-lite"/>
    </source>
</evidence>
<evidence type="ECO:0000305" key="5"/>
<feature type="chain" id="PRO_0000310479" description="Peroxisomal membrane protein pex13">
    <location>
        <begin position="1"/>
        <end position="288"/>
    </location>
</feature>
<feature type="transmembrane region" description="Helical" evidence="2">
    <location>
        <begin position="178"/>
        <end position="198"/>
    </location>
</feature>
<feature type="domain" description="SH3" evidence="3">
    <location>
        <begin position="222"/>
        <end position="288"/>
    </location>
</feature>
<feature type="region of interest" description="Disordered" evidence="4">
    <location>
        <begin position="1"/>
        <end position="32"/>
    </location>
</feature>
<feature type="compositionally biased region" description="Polar residues" evidence="4">
    <location>
        <begin position="22"/>
        <end position="32"/>
    </location>
</feature>
<accession>O14136</accession>